<accession>P0DXX8</accession>
<dbReference type="EMBL" id="AE000513">
    <property type="status" value="NOT_ANNOTATED_CDS"/>
    <property type="molecule type" value="Genomic_DNA"/>
</dbReference>
<dbReference type="RefSeq" id="NP_296325.1">
    <property type="nucleotide sequence ID" value="NC_001263.1"/>
</dbReference>
<dbReference type="RefSeq" id="WP_010889230.1">
    <property type="nucleotide sequence ID" value="NC_001263.1"/>
</dbReference>
<dbReference type="Proteomes" id="UP000002524">
    <property type="component" value="Chromosome 1"/>
</dbReference>
<dbReference type="Gene3D" id="3.40.50.300">
    <property type="entry name" value="P-loop containing nucleotide triphosphate hydrolases"/>
    <property type="match status" value="1"/>
</dbReference>
<dbReference type="HAMAP" id="MF_00983">
    <property type="entry name" value="PriA"/>
    <property type="match status" value="1"/>
</dbReference>
<dbReference type="InterPro" id="IPR027417">
    <property type="entry name" value="P-loop_NTPase"/>
</dbReference>
<dbReference type="InterPro" id="IPR005259">
    <property type="entry name" value="PriA"/>
</dbReference>
<dbReference type="InterPro" id="IPR041222">
    <property type="entry name" value="PriA_3primeBD"/>
</dbReference>
<dbReference type="InterPro" id="IPR041236">
    <property type="entry name" value="PriA_C"/>
</dbReference>
<dbReference type="InterPro" id="IPR040498">
    <property type="entry name" value="PriA_CRR"/>
</dbReference>
<dbReference type="InterPro" id="IPR050880">
    <property type="entry name" value="PriA_helicase"/>
</dbReference>
<dbReference type="NCBIfam" id="TIGR00595">
    <property type="entry name" value="priA"/>
    <property type="match status" value="1"/>
</dbReference>
<dbReference type="PANTHER" id="PTHR30580">
    <property type="entry name" value="PRIMOSOMAL PROTEIN N"/>
    <property type="match status" value="1"/>
</dbReference>
<dbReference type="PANTHER" id="PTHR30580:SF0">
    <property type="entry name" value="PRIMOSOMAL PROTEIN N"/>
    <property type="match status" value="1"/>
</dbReference>
<dbReference type="Pfam" id="PF17764">
    <property type="entry name" value="PriA_3primeBD"/>
    <property type="match status" value="1"/>
</dbReference>
<dbReference type="Pfam" id="PF18074">
    <property type="entry name" value="PriA_C"/>
    <property type="match status" value="1"/>
</dbReference>
<dbReference type="Pfam" id="PF18319">
    <property type="entry name" value="Zn_ribbon_PriA"/>
    <property type="match status" value="1"/>
</dbReference>
<dbReference type="SUPFAM" id="SSF52540">
    <property type="entry name" value="P-loop containing nucleoside triphosphate hydrolases"/>
    <property type="match status" value="1"/>
</dbReference>
<evidence type="ECO:0000255" key="1">
    <source>
        <dbReference type="HAMAP-Rule" id="MF_00983"/>
    </source>
</evidence>
<evidence type="ECO:0000269" key="2">
    <source>
    </source>
</evidence>
<evidence type="ECO:0000303" key="3">
    <source>
    </source>
</evidence>
<evidence type="ECO:0000305" key="4">
    <source>
    </source>
</evidence>
<keyword id="KW-0067">ATP-binding</keyword>
<keyword id="KW-0235">DNA replication</keyword>
<keyword id="KW-0238">DNA-binding</keyword>
<keyword id="KW-0479">Metal-binding</keyword>
<keyword id="KW-0547">Nucleotide-binding</keyword>
<keyword id="KW-0639">Primosome</keyword>
<keyword id="KW-1185">Reference proteome</keyword>
<keyword id="KW-0862">Zinc</keyword>
<protein>
    <recommendedName>
        <fullName evidence="1">Probable replication restart protein PriA</fullName>
    </recommendedName>
    <alternativeName>
        <fullName evidence="3">Pseudohelicase PriA</fullName>
    </alternativeName>
    <alternativeName>
        <fullName evidence="1">Putative ATP-dependent DNA helicase PriA</fullName>
    </alternativeName>
</protein>
<feature type="chain" id="PRO_0000462141" description="Probable replication restart protein PriA">
    <location>
        <begin position="1"/>
        <end position="925"/>
    </location>
</feature>
<feature type="binding site" evidence="1">
    <location>
        <position position="645"/>
    </location>
    <ligand>
        <name>Zn(2+)</name>
        <dbReference type="ChEBI" id="CHEBI:29105"/>
        <label>1</label>
    </ligand>
</feature>
<feature type="binding site" evidence="1">
    <location>
        <position position="648"/>
    </location>
    <ligand>
        <name>Zn(2+)</name>
        <dbReference type="ChEBI" id="CHEBI:29105"/>
        <label>1</label>
    </ligand>
</feature>
<feature type="binding site" evidence="1">
    <location>
        <position position="654"/>
    </location>
    <ligand>
        <name>Zn(2+)</name>
        <dbReference type="ChEBI" id="CHEBI:29105"/>
        <label>2</label>
    </ligand>
</feature>
<feature type="binding site" evidence="1">
    <location>
        <position position="657"/>
    </location>
    <ligand>
        <name>Zn(2+)</name>
        <dbReference type="ChEBI" id="CHEBI:29105"/>
        <label>2</label>
    </ligand>
</feature>
<feature type="binding site" evidence="1">
    <location>
        <position position="672"/>
    </location>
    <ligand>
        <name>Zn(2+)</name>
        <dbReference type="ChEBI" id="CHEBI:29105"/>
        <label>2</label>
    </ligand>
</feature>
<feature type="binding site" evidence="1">
    <location>
        <position position="675"/>
    </location>
    <ligand>
        <name>Zn(2+)</name>
        <dbReference type="ChEBI" id="CHEBI:29105"/>
        <label>2</label>
    </ligand>
</feature>
<feature type="binding site" evidence="1">
    <location>
        <position position="685"/>
    </location>
    <ligand>
        <name>Zn(2+)</name>
        <dbReference type="ChEBI" id="CHEBI:29105"/>
        <label>1</label>
    </ligand>
</feature>
<feature type="binding site" evidence="1">
    <location>
        <position position="688"/>
    </location>
    <ligand>
        <name>Zn(2+)</name>
        <dbReference type="ChEBI" id="CHEBI:29105"/>
        <label>1</label>
    </ligand>
</feature>
<sequence length="925" mass="99157">MTLWTVSPPAVSSEAEEKPVQDTVSLTAADQTWQVCVPLPIAALDFAAPHGYVGEVPLGCRVAVPWRGGEIRVGLVVGAGSSMGRHRLREALALLDSPEAPWVAPGTARGLTAWAEEAHLPPGLVWDDLLCTGWEPAHRHEVRAVPGADLSPYGETLPDTDWSRADLYPPALLDAAREQGLLDDRFLPDPPQVNRVVARDLNDVPPAARTQVVVTAQPWEAADPALCTPPHWEAVTGEGALTAKQQQAHDWLRAHGPQPSLGAWASGAKVGLPVVRKVADLGWAQEHPQAVPPPPAWKWLREHGPVASPAAWASAAGVRPAEVRRLMEGGAADYTFTPVTPPAAWAWLREHGPAETVSAWATGAGVSPSVAAGLLARGWAAQVQMPAPPPELPAAPLWAGPPLDELTALAADALPEEDRWRLHGGRPASRFAALAPRVARLLAQGRSVLILAPDHATLRRAWAGLGGLAALAGTRAALLSGQLSPRQREEIWRQVRAGDVRLVIGSALALSAPLPDLALLVVLEEGSDAYKLLSGSRAFVPDVAARVARSLRAALGLVGSVPAVESVPLPGLVLAPPRARVHVVDYAQPPAQPELGPLSSVHLTPGDLGYPISHDLARLLRQVQERGRQAALLAPRRGYSALLRCPRCDHVPGCPNCDVPLRFHQDRRQMECHQCGHHQSVPDRCDECGEQMWKARGPGTEWIAAEVEKLLPGFPVYRLDKDHQDDLAPLHAGEAGVVVGTQLLLAQPSPPNLALIGVTLADTWLGVSDFRASERYHRLLRQLAEWHPSRAPLLVVQTFQGDHPALKVLETGRDALAYPAAEERVRAELFYPPHARLAQIEVAARDRDRAKVAAQALADALHGAGAVATEVLGPAHAAVARVRGAYLYQLLLRARNDARLAELLGVLDTRSWGARVRVDVNPRST</sequence>
<proteinExistence type="evidence at protein level"/>
<comment type="function">
    <text evidence="1 2 4">Initiates the restart of stalled replication forks, which reloads the replicative helicase on sites other than the origin of replication (Probable). Recognizes abandoned replication forks and remodels them to uncover a helicase loading site. Promotes assembly of the primosome at these replication forks (Probable) (PubMed:26182205). Recognizes and binds DNA at stalled replication forks, also binds single-stranded (ss)DNA (PubMed:26182205).</text>
</comment>
<comment type="cofactor">
    <cofactor evidence="1">
        <name>Zn(2+)</name>
        <dbReference type="ChEBI" id="CHEBI:29105"/>
    </cofactor>
    <text evidence="1">Binds 2 zinc ions per subunit.</text>
</comment>
<comment type="subunit">
    <text evidence="1 4">Interacts with DnaB (DR_0549) (Probable) (PubMed:26182205). Component of the replication restart primosome.</text>
</comment>
<comment type="similarity">
    <text evidence="1">Belongs to the helicase family. PriA subfamily.</text>
</comment>
<comment type="caution">
    <text evidence="2">No helicase or ATPase activities have been shown for this protein on a forked substrate with a nascent lagging strand (the preferred substrate for E.coli and B.subtilis) or in the presence of ssDNA, respectively.</text>
</comment>
<organism>
    <name type="scientific">Deinococcus radiodurans (strain ATCC 13939 / DSM 20539 / JCM 16871 / CCUG 27074 / LMG 4051 / NBRC 15346 / NCIMB 9279 / VKM B-1422 / R1)</name>
    <dbReference type="NCBI Taxonomy" id="243230"/>
    <lineage>
        <taxon>Bacteria</taxon>
        <taxon>Thermotogati</taxon>
        <taxon>Deinococcota</taxon>
        <taxon>Deinococci</taxon>
        <taxon>Deinococcales</taxon>
        <taxon>Deinococcaceae</taxon>
        <taxon>Deinococcus</taxon>
    </lineage>
</organism>
<reference key="1">
    <citation type="journal article" date="1999" name="Science">
        <title>Genome sequence of the radioresistant bacterium Deinococcus radiodurans R1.</title>
        <authorList>
            <person name="White O."/>
            <person name="Eisen J.A."/>
            <person name="Heidelberg J.F."/>
            <person name="Hickey E.K."/>
            <person name="Peterson J.D."/>
            <person name="Dodson R.J."/>
            <person name="Haft D.H."/>
            <person name="Gwinn M.L."/>
            <person name="Nelson W.C."/>
            <person name="Richardson D.L."/>
            <person name="Moffat K.S."/>
            <person name="Qin H."/>
            <person name="Jiang L."/>
            <person name="Pamphile W."/>
            <person name="Crosby M."/>
            <person name="Shen M."/>
            <person name="Vamathevan J.J."/>
            <person name="Lam P."/>
            <person name="McDonald L.A."/>
            <person name="Utterback T.R."/>
            <person name="Zalewski C."/>
            <person name="Makarova K.S."/>
            <person name="Aravind L."/>
            <person name="Daly M.J."/>
            <person name="Minton K.W."/>
            <person name="Fleischmann R.D."/>
            <person name="Ketchum K.A."/>
            <person name="Nelson K.E."/>
            <person name="Salzberg S.L."/>
            <person name="Smith H.O."/>
            <person name="Venter J.C."/>
            <person name="Fraser C.M."/>
        </authorList>
    </citation>
    <scope>NUCLEOTIDE SEQUENCE [LARGE SCALE GENOMIC DNA]</scope>
    <source>
        <strain>ATCC 13939 / DSM 20539 / JCM 16871 / CCUG 27074 / LMG 4051 / NBRC 15346 / NCIMB 9279 / VKM B-1422 / R1</strain>
    </source>
</reference>
<reference key="2">
    <citation type="journal article" date="2015" name="PLoS ONE">
        <title>Deinococcus radiodurans PriA is a Pseudohelicase.</title>
        <authorList>
            <person name="Lopper M.E."/>
            <person name="Boone J."/>
            <person name="Morrow C."/>
        </authorList>
    </citation>
    <scope>LACK OF HELICASE AND ATPASE ACTIVITY</scope>
    <scope>SUBUNIT</scope>
    <scope>PROBABLE INTERACTION WITH DNAB</scope>
    <scope>DNA-BINDING</scope>
    <source>
        <strain>ATCC 13939 / DSM 20539 / JCM 16871 / CCUG 27074 / LMG 4051 / NBRC 15346 / NCIMB 9279 / VKM B-1422 / R1</strain>
    </source>
</reference>
<gene>
    <name evidence="1" type="primary">priA</name>
    <name type="ordered locus">DR_2606</name>
</gene>
<name>PRIA_DEIRA</name>